<keyword id="KW-0175">Coiled coil</keyword>
<keyword id="KW-0963">Cytoplasm</keyword>
<keyword id="KW-0225">Disease variant</keyword>
<keyword id="KW-0038">Ectodermal dysplasia</keyword>
<keyword id="KW-0403">Intermediate filament</keyword>
<keyword id="KW-1017">Isopeptide bond</keyword>
<keyword id="KW-0416">Keratin</keyword>
<keyword id="KW-1007">Palmoplantar keratoderma</keyword>
<keyword id="KW-0597">Phosphoprotein</keyword>
<keyword id="KW-1267">Proteomics identification</keyword>
<keyword id="KW-1185">Reference proteome</keyword>
<keyword id="KW-0832">Ubl conjugation</keyword>
<dbReference type="EMBL" id="Z19574">
    <property type="protein sequence ID" value="CAA79626.1"/>
    <property type="molecule type" value="Genomic_DNA"/>
</dbReference>
<dbReference type="EMBL" id="X62571">
    <property type="protein sequence ID" value="CAA44451.1"/>
    <property type="molecule type" value="mRNA"/>
</dbReference>
<dbReference type="EMBL" id="AK095342">
    <property type="protein sequence ID" value="BAC04534.1"/>
    <property type="molecule type" value="mRNA"/>
</dbReference>
<dbReference type="EMBL" id="AC022596">
    <property type="status" value="NOT_ANNOTATED_CDS"/>
    <property type="molecule type" value="Genomic_DNA"/>
</dbReference>
<dbReference type="EMBL" id="AL353997">
    <property type="status" value="NOT_ANNOTATED_CDS"/>
    <property type="molecule type" value="Genomic_DNA"/>
</dbReference>
<dbReference type="EMBL" id="BC000159">
    <property type="protein sequence ID" value="AAH00159.2"/>
    <property type="molecule type" value="mRNA"/>
</dbReference>
<dbReference type="EMBL" id="BC011901">
    <property type="protein sequence ID" value="AAH11901.1"/>
    <property type="molecule type" value="mRNA"/>
</dbReference>
<dbReference type="EMBL" id="BC056421">
    <property type="protein sequence ID" value="AAH56421.1"/>
    <property type="molecule type" value="mRNA"/>
</dbReference>
<dbReference type="EMBL" id="BC072018">
    <property type="protein sequence ID" value="AAH72018.1"/>
    <property type="status" value="ALT_FRAME"/>
    <property type="molecule type" value="mRNA"/>
</dbReference>
<dbReference type="EMBL" id="BC072019">
    <property type="protein sequence ID" value="AAH72019.1"/>
    <property type="molecule type" value="mRNA"/>
</dbReference>
<dbReference type="EMBL" id="S78515">
    <property type="protein sequence ID" value="AAB34565.1"/>
    <property type="molecule type" value="Genomic_DNA"/>
</dbReference>
<dbReference type="EMBL" id="EF608068">
    <property type="protein sequence ID" value="ABQ96595.1"/>
    <property type="molecule type" value="mRNA"/>
</dbReference>
<dbReference type="EMBL" id="EF608069">
    <property type="protein sequence ID" value="ABQ96596.1"/>
    <property type="molecule type" value="mRNA"/>
</dbReference>
<dbReference type="EMBL" id="EF608070">
    <property type="protein sequence ID" value="ABQ96597.1"/>
    <property type="molecule type" value="mRNA"/>
</dbReference>
<dbReference type="EMBL" id="EF608071">
    <property type="protein sequence ID" value="ABQ96598.1"/>
    <property type="molecule type" value="mRNA"/>
</dbReference>
<dbReference type="CCDS" id="CCDS11402.1"/>
<dbReference type="PIR" id="S30433">
    <property type="entry name" value="S30433"/>
</dbReference>
<dbReference type="RefSeq" id="NP_000413.1">
    <property type="nucleotide sequence ID" value="NM_000422.3"/>
</dbReference>
<dbReference type="SMR" id="Q04695"/>
<dbReference type="BioGRID" id="110070">
    <property type="interactions" value="251"/>
</dbReference>
<dbReference type="DIP" id="DIP-33093N"/>
<dbReference type="FunCoup" id="Q04695">
    <property type="interactions" value="493"/>
</dbReference>
<dbReference type="IntAct" id="Q04695">
    <property type="interactions" value="43"/>
</dbReference>
<dbReference type="MINT" id="Q04695"/>
<dbReference type="STRING" id="9606.ENSP00000308452"/>
<dbReference type="GlyCosmos" id="Q04695">
    <property type="glycosylation" value="3 sites, 1 glycan"/>
</dbReference>
<dbReference type="GlyGen" id="Q04695">
    <property type="glycosylation" value="4 sites, 1 O-linked glycan (4 sites)"/>
</dbReference>
<dbReference type="iPTMnet" id="Q04695"/>
<dbReference type="MetOSite" id="Q04695"/>
<dbReference type="PhosphoSitePlus" id="Q04695"/>
<dbReference type="SwissPalm" id="Q04695"/>
<dbReference type="BioMuta" id="KRT17"/>
<dbReference type="DMDM" id="547751"/>
<dbReference type="CPTAC" id="CPTAC-1516"/>
<dbReference type="CPTAC" id="CPTAC-1517"/>
<dbReference type="jPOST" id="Q04695"/>
<dbReference type="MassIVE" id="Q04695"/>
<dbReference type="PaxDb" id="9606-ENSP00000308452"/>
<dbReference type="PeptideAtlas" id="Q04695"/>
<dbReference type="PRIDE" id="Q04695"/>
<dbReference type="ProteomicsDB" id="58264"/>
<dbReference type="TopDownProteomics" id="Q04695"/>
<dbReference type="ABCD" id="Q04695">
    <property type="antibodies" value="2 sequenced antibodies"/>
</dbReference>
<dbReference type="Antibodypedia" id="6491">
    <property type="antibodies" value="1309 antibodies from 46 providers"/>
</dbReference>
<dbReference type="DNASU" id="3872"/>
<dbReference type="Ensembl" id="ENST00000311208.13">
    <property type="protein sequence ID" value="ENSP00000308452.8"/>
    <property type="gene ID" value="ENSG00000128422.18"/>
</dbReference>
<dbReference type="GeneID" id="3872"/>
<dbReference type="KEGG" id="hsa:3872"/>
<dbReference type="MANE-Select" id="ENST00000311208.13">
    <property type="protein sequence ID" value="ENSP00000308452.8"/>
    <property type="RefSeq nucleotide sequence ID" value="NM_000422.3"/>
    <property type="RefSeq protein sequence ID" value="NP_000413.1"/>
</dbReference>
<dbReference type="UCSC" id="uc002hxh.3">
    <property type="organism name" value="human"/>
</dbReference>
<dbReference type="AGR" id="HGNC:6427"/>
<dbReference type="CTD" id="3872"/>
<dbReference type="DisGeNET" id="3872"/>
<dbReference type="GeneCards" id="KRT17"/>
<dbReference type="GeneReviews" id="KRT17"/>
<dbReference type="HGNC" id="HGNC:6427">
    <property type="gene designation" value="KRT17"/>
</dbReference>
<dbReference type="HPA" id="ENSG00000128422">
    <property type="expression patterns" value="Tissue enhanced (breast, skin, urinary bladder)"/>
</dbReference>
<dbReference type="MalaCards" id="KRT17"/>
<dbReference type="MIM" id="148069">
    <property type="type" value="gene"/>
</dbReference>
<dbReference type="MIM" id="167210">
    <property type="type" value="phenotype"/>
</dbReference>
<dbReference type="MIM" id="184500">
    <property type="type" value="phenotype"/>
</dbReference>
<dbReference type="neXtProt" id="NX_Q04695"/>
<dbReference type="OpenTargets" id="ENSG00000128422"/>
<dbReference type="Orphanet" id="2309">
    <property type="disease" value="Pachyonychia congenita"/>
</dbReference>
<dbReference type="Orphanet" id="841">
    <property type="disease" value="Sebocystomatosis"/>
</dbReference>
<dbReference type="PharmGKB" id="PA30214"/>
<dbReference type="VEuPathDB" id="HostDB:ENSG00000128422"/>
<dbReference type="eggNOG" id="ENOG502QTM6">
    <property type="taxonomic scope" value="Eukaryota"/>
</dbReference>
<dbReference type="GeneTree" id="ENSGT00940000160681"/>
<dbReference type="HOGENOM" id="CLU_012560_8_1_1"/>
<dbReference type="InParanoid" id="Q04695"/>
<dbReference type="OMA" id="QYKTKEP"/>
<dbReference type="OrthoDB" id="2441647at2759"/>
<dbReference type="PAN-GO" id="Q04695">
    <property type="GO annotations" value="4 GO annotations based on evolutionary models"/>
</dbReference>
<dbReference type="PhylomeDB" id="Q04695"/>
<dbReference type="TreeFam" id="TF332742"/>
<dbReference type="PathwayCommons" id="Q04695"/>
<dbReference type="Reactome" id="R-HSA-6805567">
    <property type="pathway name" value="Keratinization"/>
</dbReference>
<dbReference type="Reactome" id="R-HSA-6809371">
    <property type="pathway name" value="Formation of the cornified envelope"/>
</dbReference>
<dbReference type="SignaLink" id="Q04695"/>
<dbReference type="SIGNOR" id="Q04695"/>
<dbReference type="BioGRID-ORCS" id="3872">
    <property type="hits" value="88 hits in 1107 CRISPR screens"/>
</dbReference>
<dbReference type="CD-CODE" id="91857CE7">
    <property type="entry name" value="Nucleolus"/>
</dbReference>
<dbReference type="ChiTaRS" id="KRT17">
    <property type="organism name" value="human"/>
</dbReference>
<dbReference type="GeneWiki" id="Keratin_17"/>
<dbReference type="GenomeRNAi" id="3872"/>
<dbReference type="Pharos" id="Q04695">
    <property type="development level" value="Tbio"/>
</dbReference>
<dbReference type="PRO" id="PR:Q04695"/>
<dbReference type="Proteomes" id="UP000005640">
    <property type="component" value="Chromosome 17"/>
</dbReference>
<dbReference type="RNAct" id="Q04695">
    <property type="molecule type" value="protein"/>
</dbReference>
<dbReference type="Bgee" id="ENSG00000128422">
    <property type="expression patterns" value="Expressed in gingival epithelium and 161 other cell types or tissues"/>
</dbReference>
<dbReference type="ExpressionAtlas" id="Q04695">
    <property type="expression patterns" value="baseline and differential"/>
</dbReference>
<dbReference type="GO" id="GO:0001533">
    <property type="term" value="C:cornified envelope"/>
    <property type="evidence" value="ECO:0007669"/>
    <property type="project" value="Ensembl"/>
</dbReference>
<dbReference type="GO" id="GO:0005856">
    <property type="term" value="C:cytoskeleton"/>
    <property type="evidence" value="ECO:0000318"/>
    <property type="project" value="GO_Central"/>
</dbReference>
<dbReference type="GO" id="GO:0005829">
    <property type="term" value="C:cytosol"/>
    <property type="evidence" value="ECO:0000304"/>
    <property type="project" value="Reactome"/>
</dbReference>
<dbReference type="GO" id="GO:0005882">
    <property type="term" value="C:intermediate filament"/>
    <property type="evidence" value="ECO:0007669"/>
    <property type="project" value="UniProtKB-KW"/>
</dbReference>
<dbReference type="GO" id="GO:0045111">
    <property type="term" value="C:intermediate filament cytoskeleton"/>
    <property type="evidence" value="ECO:0000314"/>
    <property type="project" value="HPA"/>
</dbReference>
<dbReference type="GO" id="GO:0005198">
    <property type="term" value="F:structural molecule activity"/>
    <property type="evidence" value="ECO:0007669"/>
    <property type="project" value="InterPro"/>
</dbReference>
<dbReference type="GO" id="GO:0030855">
    <property type="term" value="P:epithelial cell differentiation"/>
    <property type="evidence" value="ECO:0000318"/>
    <property type="project" value="GO_Central"/>
</dbReference>
<dbReference type="GO" id="GO:0031069">
    <property type="term" value="P:hair follicle morphogenesis"/>
    <property type="evidence" value="ECO:0000250"/>
    <property type="project" value="UniProtKB"/>
</dbReference>
<dbReference type="GO" id="GO:0045109">
    <property type="term" value="P:intermediate filament organization"/>
    <property type="evidence" value="ECO:0000318"/>
    <property type="project" value="GO_Central"/>
</dbReference>
<dbReference type="GO" id="GO:0031424">
    <property type="term" value="P:keratinization"/>
    <property type="evidence" value="ECO:0007669"/>
    <property type="project" value="Ensembl"/>
</dbReference>
<dbReference type="GO" id="GO:0030307">
    <property type="term" value="P:positive regulation of cell growth"/>
    <property type="evidence" value="ECO:0007669"/>
    <property type="project" value="Ensembl"/>
</dbReference>
<dbReference type="GO" id="GO:0051798">
    <property type="term" value="P:positive regulation of hair follicle development"/>
    <property type="evidence" value="ECO:0007669"/>
    <property type="project" value="Ensembl"/>
</dbReference>
<dbReference type="GO" id="GO:0045727">
    <property type="term" value="P:positive regulation of translation"/>
    <property type="evidence" value="ECO:0007669"/>
    <property type="project" value="Ensembl"/>
</dbReference>
<dbReference type="FunFam" id="1.20.5.1160:FF:000002">
    <property type="entry name" value="Type I keratin 10"/>
    <property type="match status" value="1"/>
</dbReference>
<dbReference type="FunFam" id="1.20.5.170:FF:000002">
    <property type="entry name" value="Type I keratin KA11"/>
    <property type="match status" value="1"/>
</dbReference>
<dbReference type="FunFam" id="1.20.5.500:FF:000001">
    <property type="entry name" value="Type II keratin 23"/>
    <property type="match status" value="1"/>
</dbReference>
<dbReference type="Gene3D" id="1.20.5.170">
    <property type="match status" value="1"/>
</dbReference>
<dbReference type="Gene3D" id="1.20.5.500">
    <property type="entry name" value="Single helix bin"/>
    <property type="match status" value="1"/>
</dbReference>
<dbReference type="Gene3D" id="1.20.5.1160">
    <property type="entry name" value="Vasodilator-stimulated phosphoprotein"/>
    <property type="match status" value="1"/>
</dbReference>
<dbReference type="InterPro" id="IPR018039">
    <property type="entry name" value="IF_conserved"/>
</dbReference>
<dbReference type="InterPro" id="IPR039008">
    <property type="entry name" value="IF_rod_dom"/>
</dbReference>
<dbReference type="InterPro" id="IPR002957">
    <property type="entry name" value="Keratin_I"/>
</dbReference>
<dbReference type="PANTHER" id="PTHR23239">
    <property type="entry name" value="INTERMEDIATE FILAMENT"/>
    <property type="match status" value="1"/>
</dbReference>
<dbReference type="PANTHER" id="PTHR23239:SF180">
    <property type="entry name" value="KERATIN, TYPE I CYTOSKELETAL 17"/>
    <property type="match status" value="1"/>
</dbReference>
<dbReference type="Pfam" id="PF00038">
    <property type="entry name" value="Filament"/>
    <property type="match status" value="1"/>
</dbReference>
<dbReference type="PRINTS" id="PR01248">
    <property type="entry name" value="TYPE1KERATIN"/>
</dbReference>
<dbReference type="SMART" id="SM01391">
    <property type="entry name" value="Filament"/>
    <property type="match status" value="1"/>
</dbReference>
<dbReference type="SUPFAM" id="SSF64593">
    <property type="entry name" value="Intermediate filament protein, coiled coil region"/>
    <property type="match status" value="2"/>
</dbReference>
<dbReference type="SUPFAM" id="SSF46579">
    <property type="entry name" value="Prefoldin"/>
    <property type="match status" value="1"/>
</dbReference>
<dbReference type="PROSITE" id="PS00226">
    <property type="entry name" value="IF_ROD_1"/>
    <property type="match status" value="1"/>
</dbReference>
<dbReference type="PROSITE" id="PS51842">
    <property type="entry name" value="IF_ROD_2"/>
    <property type="match status" value="1"/>
</dbReference>
<protein>
    <recommendedName>
        <fullName>Keratin, type I cytoskeletal 17</fullName>
    </recommendedName>
    <alternativeName>
        <fullName>39.1</fullName>
    </alternativeName>
    <alternativeName>
        <fullName>Cytokeratin-17</fullName>
        <shortName>CK-17</shortName>
    </alternativeName>
    <alternativeName>
        <fullName>Keratin-17</fullName>
        <shortName>K17</shortName>
    </alternativeName>
</protein>
<sequence>MTTSIRQFTSSSSIKGSSGLGGGSSRTSCRLSGGLGAGSCRLGSAGGLGSTLGGSSYSSCYSFGSGGGYGSSFGGVDGLLAGGEKATMQNLNDRLASYLDKVRALEEANTELEVKIRDWYQRQAPGPARDYSQYYRTIEELQNKILTATVDNANILLQIDNARLAADDFRTKFETEQALRLSVEADINGLRRVLDELTLARADLEMQIENLKEELAYLKKNHEEEMNALRGQVGGEINVEMDAAPGVDLSRILNEMRDQYEKMAEKNRKDAEDWFFSKTEELNREVATNSELVQSGKSEISELRRTMQALEIELQSQLSMKASLEGNLAETENRYCVQLSQIQGLIGSVEEQLAQLRCEMEQQNQEYKILLDVKTRLEQEIATYRRLLEGEDAHLTQYKKEPVTTRQVRTIVEEVQDGKVISSREQVHQTTR</sequence>
<proteinExistence type="evidence at protein level"/>
<organism>
    <name type="scientific">Homo sapiens</name>
    <name type="common">Human</name>
    <dbReference type="NCBI Taxonomy" id="9606"/>
    <lineage>
        <taxon>Eukaryota</taxon>
        <taxon>Metazoa</taxon>
        <taxon>Chordata</taxon>
        <taxon>Craniata</taxon>
        <taxon>Vertebrata</taxon>
        <taxon>Euteleostomi</taxon>
        <taxon>Mammalia</taxon>
        <taxon>Eutheria</taxon>
        <taxon>Euarchontoglires</taxon>
        <taxon>Primates</taxon>
        <taxon>Haplorrhini</taxon>
        <taxon>Catarrhini</taxon>
        <taxon>Hominidae</taxon>
        <taxon>Homo</taxon>
    </lineage>
</organism>
<comment type="function">
    <text evidence="4 9 17 22">Type I keratin involved in the formation and maintenance of various skin appendages, specifically in determining shape and orientation of hair (By similarity). Required for the correct growth of hair follicles, in particular for the persistence of the anagen (growth) state (By similarity). Modulates the function of TNF-alpha in the specific context of hair cycling. Regulates protein synthesis and epithelial cell growth through binding to the adapter protein SFN and by stimulating Akt/mTOR pathway (By similarity). Involved in tissue repair. May be a marker of basal cell differentiation in complex epithelia and therefore indicative of a certain type of epithelial 'stem cells'. Acts as a promoter of epithelial proliferation by acting a regulator of immune response in skin: promotes Th1/Th17-dominated immune environment contributing to the development of basaloid skin tumors (By similarity). May act as an autoantigen in the immunopathogenesis of psoriasis, with certain peptide regions being a major target for autoreactive T-cells and hence causing their proliferation.</text>
</comment>
<comment type="subunit">
    <text evidence="1">Heterodimer of a type I and a type II keratin. KRT17 associates with KRT6 isomers (KRT6A or KRT6B). Interacts with TRADD and SFN (By similarity).</text>
</comment>
<comment type="interaction">
    <interactant intactId="EBI-297873">
        <id>Q04695</id>
    </interactant>
    <interactant intactId="EBI-739674">
        <id>Q15834</id>
        <label>CCDC85B</label>
    </interactant>
    <organismsDiffer>false</organismsDiffer>
    <experiments>2</experiments>
</comment>
<comment type="interaction">
    <interactant intactId="EBI-297873">
        <id>Q04695</id>
    </interactant>
    <interactant intactId="EBI-351467">
        <id>P26641</id>
        <label>EEF1G</label>
    </interactant>
    <organismsDiffer>false</organismsDiffer>
    <experiments>2</experiments>
</comment>
<comment type="interaction">
    <interactant intactId="EBI-297873">
        <id>Q04695</id>
    </interactant>
    <interactant intactId="EBI-749955">
        <id>Q86WT6</id>
        <label>TRIM69</label>
    </interactant>
    <organismsDiffer>false</organismsDiffer>
    <experiments>3</experiments>
</comment>
<comment type="subcellular location">
    <subcellularLocation>
        <location evidence="4">Cytoplasm</location>
    </subcellularLocation>
</comment>
<comment type="tissue specificity">
    <text evidence="8 9 13 30">Expressed in the outer root sheath and medulla region of hair follicle specifically from eyebrow and beard, digital pulp, nail matrix and nail bed epithelium, mucosal stratified squamous epithelia and in basal cells of oral epithelium, palmoplantar epidermis and sweat and mammary glands. Also expressed in myoepithelium of prostate, basal layer of urinary bladder, cambial cells of sebaceous gland and in exocervix (at protein level).</text>
</comment>
<comment type="induction">
    <text evidence="14 16 17 22">Induced in damaged or stressed epidermis. Induced by the cytokines interferon-gamma (IFN-gamma), tumor necrosis factor alpha (TNF-alpha) and transforming growth factor-alpha (TGF-alpha), and by the potent NF-kappa B inhibitor compounds Bay 11-7082 and Bay 11-7085. Down-regulated by the drug Imatinib.</text>
</comment>
<comment type="PTM">
    <text evidence="27">Phosphorylation at Ser-44 occurs in a growth- and stress-dependent fashion in skin keratinocytes, it has no effect on filament organization.</text>
</comment>
<comment type="disease" evidence="7 10 11 12 15 18 19 20 21 23 24 25 26 28 29 32 33 34">
    <disease id="DI-00892">
        <name>Pachyonychia congenita 2</name>
        <acronym>PC2</acronym>
        <description>An autosomal dominant ectodermal dysplasia characterized by hypertrophic nail dystrophy resulting in onchyogryposis (thickening and increase in curvature of the nail), palmoplantar keratoderma and hyperhidrosis, follicular hyperkeratosis, multiple epidermal cysts, absent/sparse eyebrow and body hair, and by the presence of natal teeth.</description>
        <dbReference type="MIM" id="167210"/>
    </disease>
    <text>The disease is caused by variants affecting the gene represented in this entry.</text>
</comment>
<comment type="disease" evidence="20 33 34">
    <disease id="DI-02341">
        <name>Steatocystoma multiplex</name>
        <acronym>SM</acronym>
        <description>Disease characterized by round or oval cystic tumors widely distributed on the back, anterior trunk, arms, scrotum, and thighs.</description>
        <dbReference type="MIM" id="184500"/>
    </disease>
    <text>The disease is caused by variants affecting the gene represented in this entry.</text>
</comment>
<comment type="disease">
    <text>KRT16 and KRT17 are coexpressed only in pathological situations such as metaplasias and carcinomas of the uterine cervix and in psoriasis vulgaris.</text>
</comment>
<comment type="disease">
    <text evidence="31">Defects in KRT17 may be the cause of a keratinization disorder with associated thrombocytopenia characterized by generalized harlequin ichthyosis that progress into palmoplantar keratoderma.</text>
</comment>
<comment type="miscellaneous">
    <text>There are two types of cytoskeletal and microfibrillar keratin: I (acidic; 40-55 kDa) and II (neutral to basic; 56-70 kDa).</text>
</comment>
<comment type="similarity">
    <text evidence="5">Belongs to the intermediate filament family.</text>
</comment>
<comment type="sequence caution" evidence="35">
    <conflict type="frameshift">
        <sequence resource="EMBL-CDS" id="AAH72018"/>
    </conflict>
</comment>
<comment type="online information" name="Wikipedia">
    <link uri="https://en.wikipedia.org/wiki/Keratin_17"/>
    <text>Keratin-17 entry</text>
</comment>
<name>K1C17_HUMAN</name>
<accession>Q04695</accession>
<accession>A5Z1M9</accession>
<accession>A5Z1N0</accession>
<accession>A5Z1N1</accession>
<accession>A5Z1N2</accession>
<accession>A6NDV6</accession>
<accession>A6NKQ2</accession>
<accession>Q6IP98</accession>
<accession>Q8N1P6</accession>
<evidence type="ECO:0000250" key="1"/>
<evidence type="ECO:0000250" key="2">
    <source>
        <dbReference type="UniProtKB" id="Q61414"/>
    </source>
</evidence>
<evidence type="ECO:0000250" key="3">
    <source>
        <dbReference type="UniProtKB" id="Q6IFV3"/>
    </source>
</evidence>
<evidence type="ECO:0000250" key="4">
    <source>
        <dbReference type="UniProtKB" id="Q9QWL7"/>
    </source>
</evidence>
<evidence type="ECO:0000255" key="5">
    <source>
        <dbReference type="PROSITE-ProRule" id="PRU01188"/>
    </source>
</evidence>
<evidence type="ECO:0000256" key="6">
    <source>
        <dbReference type="SAM" id="MobiDB-lite"/>
    </source>
</evidence>
<evidence type="ECO:0000269" key="7">
    <source>
    </source>
</evidence>
<evidence type="ECO:0000269" key="8">
    <source>
    </source>
</evidence>
<evidence type="ECO:0000269" key="9">
    <source>
    </source>
</evidence>
<evidence type="ECO:0000269" key="10">
    <source>
    </source>
</evidence>
<evidence type="ECO:0000269" key="11">
    <source>
    </source>
</evidence>
<evidence type="ECO:0000269" key="12">
    <source>
    </source>
</evidence>
<evidence type="ECO:0000269" key="13">
    <source>
    </source>
</evidence>
<evidence type="ECO:0000269" key="14">
    <source>
    </source>
</evidence>
<evidence type="ECO:0000269" key="15">
    <source>
    </source>
</evidence>
<evidence type="ECO:0000269" key="16">
    <source>
    </source>
</evidence>
<evidence type="ECO:0000269" key="17">
    <source>
    </source>
</evidence>
<evidence type="ECO:0000269" key="18">
    <source>
    </source>
</evidence>
<evidence type="ECO:0000269" key="19">
    <source>
    </source>
</evidence>
<evidence type="ECO:0000269" key="20">
    <source>
    </source>
</evidence>
<evidence type="ECO:0000269" key="21">
    <source>
    </source>
</evidence>
<evidence type="ECO:0000269" key="22">
    <source>
    </source>
</evidence>
<evidence type="ECO:0000269" key="23">
    <source>
    </source>
</evidence>
<evidence type="ECO:0000269" key="24">
    <source>
    </source>
</evidence>
<evidence type="ECO:0000269" key="25">
    <source>
    </source>
</evidence>
<evidence type="ECO:0000269" key="26">
    <source>
    </source>
</evidence>
<evidence type="ECO:0000269" key="27">
    <source>
    </source>
</evidence>
<evidence type="ECO:0000269" key="28">
    <source>
    </source>
</evidence>
<evidence type="ECO:0000269" key="29">
    <source>
    </source>
</evidence>
<evidence type="ECO:0000269" key="30">
    <source>
    </source>
</evidence>
<evidence type="ECO:0000269" key="31">
    <source>
    </source>
</evidence>
<evidence type="ECO:0000269" key="32">
    <source>
    </source>
</evidence>
<evidence type="ECO:0000269" key="33">
    <source>
    </source>
</evidence>
<evidence type="ECO:0000269" key="34">
    <source>
    </source>
</evidence>
<evidence type="ECO:0000305" key="35"/>
<evidence type="ECO:0007744" key="36">
    <source>
    </source>
</evidence>
<evidence type="ECO:0007744" key="37">
    <source>
    </source>
</evidence>
<evidence type="ECO:0007744" key="38">
    <source>
    </source>
</evidence>
<evidence type="ECO:0007744" key="39">
    <source>
    </source>
</evidence>
<evidence type="ECO:0007744" key="40">
    <source>
    </source>
</evidence>
<evidence type="ECO:0007744" key="41">
    <source>
    </source>
</evidence>
<evidence type="ECO:0007744" key="42">
    <source>
    </source>
</evidence>
<evidence type="ECO:0007744" key="43">
    <source>
    </source>
</evidence>
<reference key="1">
    <citation type="journal article" date="1992" name="Eur. J. Cell Biol.">
        <title>Characterization of the human gene encoding cytokeratin 17 and its expression pattern.</title>
        <authorList>
            <person name="Troyanovsky S.M."/>
            <person name="Leube R.E."/>
            <person name="Franke W.W."/>
        </authorList>
    </citation>
    <scope>NUCLEOTIDE SEQUENCE [GENOMIC DNA]</scope>
    <scope>TISSUE SPECIFICITY</scope>
</reference>
<reference key="2">
    <citation type="journal article" date="1992" name="Eur. J. Immunol.">
        <title>Interferon-gamma regulates expression of a novel keratin class I gene.</title>
        <authorList>
            <person name="Flohr T."/>
            <person name="Buwitt U."/>
            <person name="Bonnekoh B."/>
            <person name="Decker T."/>
            <person name="Boettger E.C."/>
        </authorList>
    </citation>
    <scope>NUCLEOTIDE SEQUENCE [MRNA]</scope>
    <scope>INDUCTION</scope>
</reference>
<reference key="3">
    <citation type="journal article" date="2004" name="Nat. Genet.">
        <title>Complete sequencing and characterization of 21,243 full-length human cDNAs.</title>
        <authorList>
            <person name="Ota T."/>
            <person name="Suzuki Y."/>
            <person name="Nishikawa T."/>
            <person name="Otsuki T."/>
            <person name="Sugiyama T."/>
            <person name="Irie R."/>
            <person name="Wakamatsu A."/>
            <person name="Hayashi K."/>
            <person name="Sato H."/>
            <person name="Nagai K."/>
            <person name="Kimura K."/>
            <person name="Makita H."/>
            <person name="Sekine M."/>
            <person name="Obayashi M."/>
            <person name="Nishi T."/>
            <person name="Shibahara T."/>
            <person name="Tanaka T."/>
            <person name="Ishii S."/>
            <person name="Yamamoto J."/>
            <person name="Saito K."/>
            <person name="Kawai Y."/>
            <person name="Isono Y."/>
            <person name="Nakamura Y."/>
            <person name="Nagahari K."/>
            <person name="Murakami K."/>
            <person name="Yasuda T."/>
            <person name="Iwayanagi T."/>
            <person name="Wagatsuma M."/>
            <person name="Shiratori A."/>
            <person name="Sudo H."/>
            <person name="Hosoiri T."/>
            <person name="Kaku Y."/>
            <person name="Kodaira H."/>
            <person name="Kondo H."/>
            <person name="Sugawara M."/>
            <person name="Takahashi M."/>
            <person name="Kanda K."/>
            <person name="Yokoi T."/>
            <person name="Furuya T."/>
            <person name="Kikkawa E."/>
            <person name="Omura Y."/>
            <person name="Abe K."/>
            <person name="Kamihara K."/>
            <person name="Katsuta N."/>
            <person name="Sato K."/>
            <person name="Tanikawa M."/>
            <person name="Yamazaki M."/>
            <person name="Ninomiya K."/>
            <person name="Ishibashi T."/>
            <person name="Yamashita H."/>
            <person name="Murakawa K."/>
            <person name="Fujimori K."/>
            <person name="Tanai H."/>
            <person name="Kimata M."/>
            <person name="Watanabe M."/>
            <person name="Hiraoka S."/>
            <person name="Chiba Y."/>
            <person name="Ishida S."/>
            <person name="Ono Y."/>
            <person name="Takiguchi S."/>
            <person name="Watanabe S."/>
            <person name="Yosida M."/>
            <person name="Hotuta T."/>
            <person name="Kusano J."/>
            <person name="Kanehori K."/>
            <person name="Takahashi-Fujii A."/>
            <person name="Hara H."/>
            <person name="Tanase T.-O."/>
            <person name="Nomura Y."/>
            <person name="Togiya S."/>
            <person name="Komai F."/>
            <person name="Hara R."/>
            <person name="Takeuchi K."/>
            <person name="Arita M."/>
            <person name="Imose N."/>
            <person name="Musashino K."/>
            <person name="Yuuki H."/>
            <person name="Oshima A."/>
            <person name="Sasaki N."/>
            <person name="Aotsuka S."/>
            <person name="Yoshikawa Y."/>
            <person name="Matsunawa H."/>
            <person name="Ichihara T."/>
            <person name="Shiohata N."/>
            <person name="Sano S."/>
            <person name="Moriya S."/>
            <person name="Momiyama H."/>
            <person name="Satoh N."/>
            <person name="Takami S."/>
            <person name="Terashima Y."/>
            <person name="Suzuki O."/>
            <person name="Nakagawa S."/>
            <person name="Senoh A."/>
            <person name="Mizoguchi H."/>
            <person name="Goto Y."/>
            <person name="Shimizu F."/>
            <person name="Wakebe H."/>
            <person name="Hishigaki H."/>
            <person name="Watanabe T."/>
            <person name="Sugiyama A."/>
            <person name="Takemoto M."/>
            <person name="Kawakami B."/>
            <person name="Yamazaki M."/>
            <person name="Watanabe K."/>
            <person name="Kumagai A."/>
            <person name="Itakura S."/>
            <person name="Fukuzumi Y."/>
            <person name="Fujimori Y."/>
            <person name="Komiyama M."/>
            <person name="Tashiro H."/>
            <person name="Tanigami A."/>
            <person name="Fujiwara T."/>
            <person name="Ono T."/>
            <person name="Yamada K."/>
            <person name="Fujii Y."/>
            <person name="Ozaki K."/>
            <person name="Hirao M."/>
            <person name="Ohmori Y."/>
            <person name="Kawabata A."/>
            <person name="Hikiji T."/>
            <person name="Kobatake N."/>
            <person name="Inagaki H."/>
            <person name="Ikema Y."/>
            <person name="Okamoto S."/>
            <person name="Okitani R."/>
            <person name="Kawakami T."/>
            <person name="Noguchi S."/>
            <person name="Itoh T."/>
            <person name="Shigeta K."/>
            <person name="Senba T."/>
            <person name="Matsumura K."/>
            <person name="Nakajima Y."/>
            <person name="Mizuno T."/>
            <person name="Morinaga M."/>
            <person name="Sasaki M."/>
            <person name="Togashi T."/>
            <person name="Oyama M."/>
            <person name="Hata H."/>
            <person name="Watanabe M."/>
            <person name="Komatsu T."/>
            <person name="Mizushima-Sugano J."/>
            <person name="Satoh T."/>
            <person name="Shirai Y."/>
            <person name="Takahashi Y."/>
            <person name="Nakagawa K."/>
            <person name="Okumura K."/>
            <person name="Nagase T."/>
            <person name="Nomura N."/>
            <person name="Kikuchi H."/>
            <person name="Masuho Y."/>
            <person name="Yamashita R."/>
            <person name="Nakai K."/>
            <person name="Yada T."/>
            <person name="Nakamura Y."/>
            <person name="Ohara O."/>
            <person name="Isogai T."/>
            <person name="Sugano S."/>
        </authorList>
    </citation>
    <scope>NUCLEOTIDE SEQUENCE [LARGE SCALE MRNA]</scope>
    <source>
        <tissue>Tongue</tissue>
    </source>
</reference>
<reference key="4">
    <citation type="journal article" date="2006" name="Nature">
        <title>DNA sequence of human chromosome 17 and analysis of rearrangement in the human lineage.</title>
        <authorList>
            <person name="Zody M.C."/>
            <person name="Garber M."/>
            <person name="Adams D.J."/>
            <person name="Sharpe T."/>
            <person name="Harrow J."/>
            <person name="Lupski J.R."/>
            <person name="Nicholson C."/>
            <person name="Searle S.M."/>
            <person name="Wilming L."/>
            <person name="Young S.K."/>
            <person name="Abouelleil A."/>
            <person name="Allen N.R."/>
            <person name="Bi W."/>
            <person name="Bloom T."/>
            <person name="Borowsky M.L."/>
            <person name="Bugalter B.E."/>
            <person name="Butler J."/>
            <person name="Chang J.L."/>
            <person name="Chen C.-K."/>
            <person name="Cook A."/>
            <person name="Corum B."/>
            <person name="Cuomo C.A."/>
            <person name="de Jong P.J."/>
            <person name="DeCaprio D."/>
            <person name="Dewar K."/>
            <person name="FitzGerald M."/>
            <person name="Gilbert J."/>
            <person name="Gibson R."/>
            <person name="Gnerre S."/>
            <person name="Goldstein S."/>
            <person name="Grafham D.V."/>
            <person name="Grocock R."/>
            <person name="Hafez N."/>
            <person name="Hagopian D.S."/>
            <person name="Hart E."/>
            <person name="Norman C.H."/>
            <person name="Humphray S."/>
            <person name="Jaffe D.B."/>
            <person name="Jones M."/>
            <person name="Kamal M."/>
            <person name="Khodiyar V.K."/>
            <person name="LaButti K."/>
            <person name="Laird G."/>
            <person name="Lehoczky J."/>
            <person name="Liu X."/>
            <person name="Lokyitsang T."/>
            <person name="Loveland J."/>
            <person name="Lui A."/>
            <person name="Macdonald P."/>
            <person name="Major J.E."/>
            <person name="Matthews L."/>
            <person name="Mauceli E."/>
            <person name="McCarroll S.A."/>
            <person name="Mihalev A.H."/>
            <person name="Mudge J."/>
            <person name="Nguyen C."/>
            <person name="Nicol R."/>
            <person name="O'Leary S.B."/>
            <person name="Osoegawa K."/>
            <person name="Schwartz D.C."/>
            <person name="Shaw-Smith C."/>
            <person name="Stankiewicz P."/>
            <person name="Steward C."/>
            <person name="Swarbreck D."/>
            <person name="Venkataraman V."/>
            <person name="Whittaker C.A."/>
            <person name="Yang X."/>
            <person name="Zimmer A.R."/>
            <person name="Bradley A."/>
            <person name="Hubbard T."/>
            <person name="Birren B.W."/>
            <person name="Rogers J."/>
            <person name="Lander E.S."/>
            <person name="Nusbaum C."/>
        </authorList>
    </citation>
    <scope>NUCLEOTIDE SEQUENCE [LARGE SCALE GENOMIC DNA]</scope>
    <scope>VARIANT PC2 ASP-109</scope>
</reference>
<reference key="5">
    <citation type="journal article" date="2004" name="Genome Res.">
        <title>The status, quality, and expansion of the NIH full-length cDNA project: the Mammalian Gene Collection (MGC).</title>
        <authorList>
            <consortium name="The MGC Project Team"/>
        </authorList>
    </citation>
    <scope>NUCLEOTIDE SEQUENCE [LARGE SCALE MRNA]</scope>
    <source>
        <tissue>Brain</tissue>
        <tissue>Cervix</tissue>
        <tissue>Muscle</tissue>
    </source>
</reference>
<reference key="6">
    <citation type="journal article" date="1995" name="Nat. Genet.">
        <title>Keratin 16 and keratin 17 mutations cause pachyonychia congenita.</title>
        <authorList>
            <person name="McLean W.H.I."/>
            <person name="Rugg E.L."/>
            <person name="Lunny D.P."/>
            <person name="Morley S.M."/>
            <person name="Lane E.B."/>
            <person name="Swensson O."/>
            <person name="Dopping-Hepenstal P.J.C."/>
            <person name="Griffiths W.A.D."/>
            <person name="Eady R.A.J."/>
            <person name="Higgins C."/>
            <person name="Navsaria H.A."/>
            <person name="Leigh I.M."/>
            <person name="Strachan T."/>
            <person name="Kunkeler L."/>
            <person name="Munro C.S."/>
        </authorList>
    </citation>
    <scope>NUCLEOTIDE SEQUENCE [MRNA] OF 85-101</scope>
    <scope>VARIANT PC2 ASP-92</scope>
</reference>
<reference key="7">
    <citation type="submission" date="2007-05" db="EMBL/GenBank/DDBJ databases">
        <authorList>
            <person name="Shen Z."/>
            <person name="Chen L."/>
            <person name="Wang G."/>
            <person name="Liu Y.-F."/>
        </authorList>
    </citation>
    <scope>NUCLEOTIDE SEQUENCE [MRNA] OF 101-117; 152-168; 306-322 AND 331-347</scope>
</reference>
<reference key="8">
    <citation type="journal article" date="1989" name="J. Cell Sci.">
        <title>Patterns of expression of keratin 17 in human epithelia: dependency on cell position.</title>
        <authorList>
            <person name="Troyanovsky S.M."/>
            <person name="Guelstein V.I."/>
            <person name="Tchipysheva T.A."/>
            <person name="Krutovskikh V.A."/>
            <person name="Bannikov G.A."/>
        </authorList>
    </citation>
    <scope>TISSUE SPECIFICITY</scope>
</reference>
<reference key="9">
    <citation type="journal article" date="2000" name="Br. J. Dermatol.">
        <title>Keratin expression in the normal nail unit: markers of regional differentiation.</title>
        <authorList>
            <person name="De Berker D."/>
            <person name="Wojnarowska F."/>
            <person name="Sviland L."/>
            <person name="Westgate G.E."/>
            <person name="Dawber R.P."/>
            <person name="Leigh I.M."/>
        </authorList>
    </citation>
    <scope>TISSUE SPECIFICITY</scope>
</reference>
<reference key="10">
    <citation type="journal article" date="2000" name="J. Invest. Dermatol.">
        <title>Keratin 17 expression in the hard epithelial context of the hair and nail, and its relevance for the pachyonychia congenita phenotype.</title>
        <authorList>
            <person name="McGowan K.M."/>
            <person name="Coulombe P.A."/>
        </authorList>
    </citation>
    <scope>FUNCTION</scope>
    <scope>TISSUE SPECIFICITY</scope>
</reference>
<reference key="11">
    <citation type="journal article" date="2005" name="J. Dermatol. Sci.">
        <title>HLA DR B1*04, *07-restricted epitopes on Keratin 17 for autoreactive T cells in psoriasis.</title>
        <authorList>
            <person name="Shen Z."/>
            <person name="Wang G."/>
            <person name="Fan J.-Y."/>
            <person name="Li W."/>
            <person name="Liu Y.-F."/>
        </authorList>
    </citation>
    <scope>FUNCTION</scope>
    <scope>INDUCTION</scope>
</reference>
<reference key="12">
    <citation type="journal article" date="2005" name="Skin Pharmacol. Physiol.">
        <title>Interferon-gamma-dependent in vitro model for the putative keratin 17 autoimmune loop in psoriasis: exploration of pharmaco- and gene-therapeutic effects.</title>
        <authorList>
            <person name="Bockelmann R."/>
            <person name="Horn T."/>
            <person name="Gollnick H."/>
            <person name="Bonnekoh B."/>
        </authorList>
    </citation>
    <scope>INDUCTION</scope>
</reference>
<reference key="13">
    <citation type="journal article" date="2006" name="Cell">
        <title>Global, in vivo, and site-specific phosphorylation dynamics in signaling networks.</title>
        <authorList>
            <person name="Olsen J.V."/>
            <person name="Blagoev B."/>
            <person name="Gnad F."/>
            <person name="Macek B."/>
            <person name="Kumar C."/>
            <person name="Mortensen P."/>
            <person name="Mann M."/>
        </authorList>
    </citation>
    <scope>IDENTIFICATION BY MASS SPECTROMETRY [LARGE SCALE ANALYSIS]</scope>
    <source>
        <tissue>Cervix carcinoma</tissue>
    </source>
</reference>
<reference key="14">
    <citation type="journal article" date="2006" name="J. Am. Acad. Dermatol.">
        <title>Altered keratin 17 peptide ligands inhibit in vitro proliferation of keratinocytes and T cells isolated from patients with psoriasis.</title>
        <authorList>
            <person name="Shen Z."/>
            <person name="Chen L."/>
            <person name="Liu Y.-F."/>
            <person name="Gao T.-W."/>
            <person name="Wang G."/>
            <person name="Fan X.-L."/>
            <person name="Fan J.-Y."/>
            <person name="Fan P.-S."/>
            <person name="Li C.-Y."/>
            <person name="Liu B."/>
            <person name="Dang Y.-P."/>
            <person name="Li C.-X."/>
        </authorList>
    </citation>
    <scope>FUNCTION</scope>
    <scope>INDUCTION</scope>
    <scope>MUTAGENESIS OF ARG-103; GLU-106; ASN-109; ASN-154; ILE-155; LEU-157; ASP-160; ASN-333; ARG-334; CYS-336 AND LEU-339</scope>
</reference>
<reference key="15">
    <citation type="journal article" date="2008" name="Mol. Cell">
        <title>Kinase-selective enrichment enables quantitative phosphoproteomics of the kinome across the cell cycle.</title>
        <authorList>
            <person name="Daub H."/>
            <person name="Olsen J.V."/>
            <person name="Bairlein M."/>
            <person name="Gnad F."/>
            <person name="Oppermann F.S."/>
            <person name="Korner R."/>
            <person name="Greff Z."/>
            <person name="Keri G."/>
            <person name="Stemmann O."/>
            <person name="Mann M."/>
        </authorList>
    </citation>
    <scope>PHOSPHORYLATION [LARGE SCALE ANALYSIS] AT SER-32</scope>
    <scope>IDENTIFICATION BY MASS SPECTROMETRY [LARGE SCALE ANALYSIS]</scope>
    <source>
        <tissue>Cervix carcinoma</tissue>
    </source>
</reference>
<reference key="16">
    <citation type="journal article" date="2008" name="Proc. Natl. Acad. Sci. U.S.A.">
        <title>A quantitative atlas of mitotic phosphorylation.</title>
        <authorList>
            <person name="Dephoure N."/>
            <person name="Zhou C."/>
            <person name="Villen J."/>
            <person name="Beausoleil S.A."/>
            <person name="Bakalarski C.E."/>
            <person name="Elledge S.J."/>
            <person name="Gygi S.P."/>
        </authorList>
    </citation>
    <scope>PHOSPHORYLATION [LARGE SCALE ANALYSIS] AT SER-13; SER-32 AND SER-39</scope>
    <scope>IDENTIFICATION BY MASS SPECTROMETRY [LARGE SCALE ANALYSIS]</scope>
    <source>
        <tissue>Cervix carcinoma</tissue>
    </source>
</reference>
<reference key="17">
    <citation type="journal article" date="2010" name="Sci. Signal.">
        <title>Quantitative phosphoproteomics reveals widespread full phosphorylation site occupancy during mitosis.</title>
        <authorList>
            <person name="Olsen J.V."/>
            <person name="Vermeulen M."/>
            <person name="Santamaria A."/>
            <person name="Kumar C."/>
            <person name="Miller M.L."/>
            <person name="Jensen L.J."/>
            <person name="Gnad F."/>
            <person name="Cox J."/>
            <person name="Jensen T.S."/>
            <person name="Nigg E.A."/>
            <person name="Brunak S."/>
            <person name="Mann M."/>
        </authorList>
    </citation>
    <scope>PHOSPHORYLATION [LARGE SCALE ANALYSIS] AT SER-32</scope>
    <scope>IDENTIFICATION BY MASS SPECTROMETRY [LARGE SCALE ANALYSIS]</scope>
    <source>
        <tissue>Cervix carcinoma</tissue>
    </source>
</reference>
<reference key="18">
    <citation type="journal article" date="2011" name="BMC Syst. Biol.">
        <title>Initial characterization of the human central proteome.</title>
        <authorList>
            <person name="Burkard T.R."/>
            <person name="Planyavsky M."/>
            <person name="Kaupe I."/>
            <person name="Breitwieser F.P."/>
            <person name="Buerckstuemmer T."/>
            <person name="Bennett K.L."/>
            <person name="Superti-Furga G."/>
            <person name="Colinge J."/>
        </authorList>
    </citation>
    <scope>IDENTIFICATION BY MASS SPECTROMETRY [LARGE SCALE ANALYSIS]</scope>
</reference>
<reference key="19">
    <citation type="journal article" date="2011" name="J. Biol. Chem.">
        <title>Type I keratin 17 protein is phosphorylated on serine 44 by p90 ribosomal protein S6 kinase 1 (RSK1) in a growth- and stress-dependent fashion.</title>
        <authorList>
            <person name="Pan X."/>
            <person name="Kane L.A."/>
            <person name="Van Eyk J.E."/>
            <person name="Coulombe P.A."/>
        </authorList>
    </citation>
    <scope>PHOSPHORYLATION AT SER-44</scope>
</reference>
<reference key="20">
    <citation type="journal article" date="2013" name="J. Proteome Res.">
        <title>Toward a comprehensive characterization of a human cancer cell phosphoproteome.</title>
        <authorList>
            <person name="Zhou H."/>
            <person name="Di Palma S."/>
            <person name="Preisinger C."/>
            <person name="Peng M."/>
            <person name="Polat A.N."/>
            <person name="Heck A.J."/>
            <person name="Mohammed S."/>
        </authorList>
    </citation>
    <scope>PHOSPHORYLATION [LARGE SCALE ANALYSIS] AT SER-12; SER-13; SER-32; SER-39; THR-110 AND SER-323</scope>
    <scope>IDENTIFICATION BY MASS SPECTROMETRY [LARGE SCALE ANALYSIS]</scope>
    <source>
        <tissue>Cervix carcinoma</tissue>
    </source>
</reference>
<reference key="21">
    <citation type="journal article" date="2014" name="Nat. Struct. Mol. Biol.">
        <title>Uncovering global SUMOylation signaling networks in a site-specific manner.</title>
        <authorList>
            <person name="Hendriks I.A."/>
            <person name="D'Souza R.C."/>
            <person name="Yang B."/>
            <person name="Verlaan-de Vries M."/>
            <person name="Mann M."/>
            <person name="Vertegaal A.C."/>
        </authorList>
    </citation>
    <scope>SUMOYLATION [LARGE SCALE ANALYSIS] AT LYS-15; LYS-399 AND LYS-419</scope>
    <scope>IDENTIFICATION BY MASS SPECTROMETRY [LARGE SCALE ANALYSIS]</scope>
</reference>
<reference key="22">
    <citation type="journal article" date="2014" name="Proc. Natl. Acad. Sci. U.S.A.">
        <title>Mapping of SUMO sites and analysis of SUMOylation changes induced by external stimuli.</title>
        <authorList>
            <person name="Impens F."/>
            <person name="Radoshevich L."/>
            <person name="Cossart P."/>
            <person name="Ribet D."/>
        </authorList>
    </citation>
    <scope>SUMOYLATION [LARGE SCALE ANALYSIS] AT LYS-15; LYS-399; LYS-400 AND LYS-419</scope>
    <scope>IDENTIFICATION BY MASS SPECTROMETRY [LARGE SCALE ANALYSIS]</scope>
</reference>
<reference key="23">
    <citation type="journal article" date="2015" name="Cell Rep.">
        <title>SUMO-2 orchestrates chromatin modifiers in response to DNA damage.</title>
        <authorList>
            <person name="Hendriks I.A."/>
            <person name="Treffers L.W."/>
            <person name="Verlaan-de Vries M."/>
            <person name="Olsen J.V."/>
            <person name="Vertegaal A.C."/>
        </authorList>
    </citation>
    <scope>SUMOYLATION [LARGE SCALE ANALYSIS] AT LYS-15 AND LYS-399</scope>
    <scope>IDENTIFICATION BY MASS SPECTROMETRY [LARGE SCALE ANALYSIS]</scope>
</reference>
<reference key="24">
    <citation type="journal article" date="2017" name="Nat. Struct. Mol. Biol.">
        <title>Site-specific mapping of the human SUMO proteome reveals co-modification with phosphorylation.</title>
        <authorList>
            <person name="Hendriks I.A."/>
            <person name="Lyon D."/>
            <person name="Young C."/>
            <person name="Jensen L.J."/>
            <person name="Vertegaal A.C."/>
            <person name="Nielsen M.L."/>
        </authorList>
    </citation>
    <scope>SUMOYLATION [LARGE SCALE ANALYSIS] AT LYS-15; LYS-278; LYS-399; LYS-400 AND LYS-419</scope>
    <scope>IDENTIFICATION BY MASS SPECTROMETRY [LARGE SCALE ANALYSIS]</scope>
</reference>
<reference key="25">
    <citation type="journal article" date="1997" name="J. Invest. Dermatol.">
        <title>Missense mutations in keratin 17 cause either pachyonychia congenita type 2 or a phenotype resembling steatocystoma multiplex.</title>
        <authorList>
            <person name="Smith F.J.D."/>
            <person name="Corden L.D."/>
            <person name="Rugg E.L."/>
            <person name="Ratnavel R."/>
            <person name="Leigh I.M."/>
            <person name="Moss C."/>
            <person name="Tidman M.J."/>
            <person name="Hohl D."/>
            <person name="Huber M."/>
            <person name="Kunkeler L."/>
            <person name="Munro C.S."/>
            <person name="Lane E.B."/>
            <person name="McLean W.H.I."/>
        </authorList>
    </citation>
    <scope>VARIANTS PC2 SER-92 AND ASP-98</scope>
    <scope>VARIANTS SM HIS-92 AND HIS-94</scope>
</reference>
<reference key="26">
    <citation type="journal article" date="1998" name="Br. J. Dermatol.">
        <title>Keratin 17 mutations cause either steatocystoma multiplex or pachyonychia congenita type 2.</title>
        <authorList>
            <person name="Covello S.P."/>
            <person name="Smith F.J.D."/>
            <person name="Sillevis Smitt J.H."/>
            <person name="Paller A.S."/>
            <person name="Munro C.S."/>
            <person name="Jonkman M.F."/>
            <person name="Uitto J."/>
            <person name="McLean W.H.I."/>
        </authorList>
    </citation>
    <scope>VARIANTS PC2 SER-92 AND CYS-94</scope>
    <scope>VARIANT SM CYS-94</scope>
</reference>
<reference key="27">
    <citation type="journal article" date="1999" name="J. Invest. Dermatol.">
        <title>Mutation report: identification of a germline mutation in keratin 17 in a family with pachyonychia congenita type 2.</title>
        <authorList>
            <person name="Celebi J.T."/>
            <person name="Tanzi E.L."/>
            <person name="Yao Y.J."/>
            <person name="Michael E.J."/>
            <person name="Peacocke M."/>
        </authorList>
    </citation>
    <scope>VARIANT PC2 THR-88</scope>
</reference>
<reference key="28">
    <citation type="journal article" date="2001" name="J. Invest. Dermatol.">
        <title>Novel keratin 17 mutations in pachyonychia congenita type 2.</title>
        <authorList>
            <person name="Smith F.J.D."/>
            <person name="Coleman C.M."/>
            <person name="Bayoumy N.M."/>
            <person name="Tenconi R."/>
            <person name="Nelson J."/>
            <person name="David A."/>
            <person name="McLean W.H.I."/>
        </authorList>
    </citation>
    <scope>VARIANTS PC2 94-PRO--TYR-98 DEL; PRO-94 AND GLN-95</scope>
</reference>
<reference key="29">
    <citation type="journal article" date="2001" name="J. Invest. Dermatol.">
        <title>Novel and recurrent mutations in the genes encoding keratins K6a, K16 and K17 in 13 cases of pachyonychia congenita.</title>
        <authorList>
            <person name="Terrinoni A."/>
            <person name="Smith F.J.D."/>
            <person name="Didona B."/>
            <person name="Canzona F."/>
            <person name="Paradisi M."/>
            <person name="Huber M."/>
            <person name="Hohl D."/>
            <person name="David A."/>
            <person name="Verloes A."/>
            <person name="Leigh I.M."/>
            <person name="Munro C.S."/>
            <person name="Melino G."/>
            <person name="McLean W.H.I."/>
        </authorList>
    </citation>
    <scope>VARIANTS PC2 PRO-95; SER-97 DEL AND PRO-99</scope>
</reference>
<reference key="30">
    <citation type="journal article" date="2002" name="J. Invest. Dermatol.">
        <title>A novel point mutation in the keratin 17 gene in a Japanese case of pachyonychia congenita type 2.</title>
        <authorList>
            <person name="Hashiguchi T."/>
            <person name="Yotsumoto S."/>
            <person name="Shimada H."/>
            <person name="Terasaki K."/>
            <person name="Setoyama M."/>
            <person name="Kobayashi K."/>
            <person name="Saheki T."/>
            <person name="Kanzaki T."/>
        </authorList>
    </citation>
    <scope>VARIANT PC2 MET-102</scope>
</reference>
<reference key="31">
    <citation type="journal article" date="2004" name="J. Invest. Dermatol.">
        <title>A novel mutation in the second half of the keratin 17 1A domain in a large pedigree with delayed-onset pachyonychia congenita type 2.</title>
        <authorList>
            <person name="Xiao S.-X."/>
            <person name="Feng Y.-G."/>
            <person name="Ren X.-R."/>
            <person name="Tan S.-S."/>
            <person name="Li L."/>
            <person name="Wang J.-M."/>
            <person name="Shi Y.-Z."/>
        </authorList>
    </citation>
    <scope>VARIANT PC2 ASP-109</scope>
</reference>
<reference key="32">
    <citation type="journal article" date="2005" name="J. Dermatol. Sci.">
        <title>Identification of a recurrent mutation in keratin 17 in a Japanese family with pachyonychia congenita type 2.</title>
        <authorList>
            <person name="Uchida T."/>
            <person name="Inaoki M."/>
            <person name="Makino E."/>
            <person name="Fujimoto W."/>
        </authorList>
    </citation>
    <scope>VARIANT PC2 MET-102</scope>
</reference>
<reference key="33">
    <citation type="journal article" date="2005" name="J. Investig. Dermatol. Symp. Proc.">
        <title>The genetic basis of pachyonychia congenita.</title>
        <authorList>
            <person name="Smith F.J."/>
            <person name="Liao H."/>
            <person name="Cassidy A.J."/>
            <person name="Stewart A."/>
            <person name="Hamill K.J."/>
            <person name="Wood P."/>
            <person name="Joval I."/>
            <person name="van Steensel M.A."/>
            <person name="Bjoerck E."/>
            <person name="Callif-Daley F."/>
            <person name="Pals G."/>
            <person name="Collins P."/>
            <person name="Leachman S.A."/>
            <person name="Munro C.S."/>
            <person name="McLean W.H."/>
        </authorList>
    </citation>
    <scope>VARIANTS PC2 SER-92 AND PRO-388</scope>
</reference>
<reference key="34">
    <citation type="journal article" date="2006" name="J. Dermatol.">
        <title>Keratin 17 mutation in pachyonychia congenita type 2 patient with early onset steatocystoma multiplex and Hutchinson-like tooth deformity.</title>
        <authorList>
            <person name="Oh S.-W."/>
            <person name="Kim M.Y."/>
            <person name="Lee J.S."/>
            <person name="Kim S.-C."/>
        </authorList>
    </citation>
    <scope>VARIANT PC2 THR-88</scope>
    <scope>VARIANT SM THR-88</scope>
</reference>
<reference key="35">
    <citation type="journal article" date="2007" name="J. Dermatol. Sci.">
        <title>A spectrum of mutations in keratins K6a, K16 and K17 causing pachyonychia congenita.</title>
        <authorList>
            <person name="Liao H."/>
            <person name="Sayers J.M."/>
            <person name="Wilson N.J."/>
            <person name="Irvine A.D."/>
            <person name="Mellerio J.E."/>
            <person name="Baselga E."/>
            <person name="Bayliss S.J."/>
            <person name="Uliana V."/>
            <person name="Fimiani M."/>
            <person name="Lane E.B."/>
            <person name="McLean W.H."/>
            <person name="Leachman S.A."/>
            <person name="Smith F.J."/>
        </authorList>
    </citation>
    <scope>VARIANT PC2 SER-92</scope>
</reference>
<reference key="36">
    <citation type="journal article" date="2008" name="Br. J. Dermatol.">
        <title>A novel point mutation of keratin 17 (KRT17) in a Japanese family with pachyonychia congenita type 2: an RNA-based genetic analysis using a single hair bulb.</title>
        <authorList>
            <person name="Tsuda T."/>
            <person name="Ishikawa C."/>
            <person name="Nakagawa N."/>
            <person name="Konishi H."/>
            <person name="Tarutani M."/>
            <person name="Matsuki M."/>
            <person name="Yamanishi K."/>
        </authorList>
    </citation>
    <scope>VARIANT PC2 LYS-88</scope>
</reference>
<reference key="37">
    <citation type="journal article" date="2009" name="J. Eur. Acad. Dermatol. Venereol.">
        <title>Novel missense mutation of keratin in Chinese family with steatocystoma multiplex.</title>
        <authorList>
            <person name="Wang J.F."/>
            <person name="Lu W.S."/>
            <person name="Sun L.D."/>
            <person name="Lv Y.M."/>
            <person name="Zhou F.S."/>
            <person name="Fang Q.Y."/>
            <person name="Tang H.Y."/>
            <person name="Cui Y."/>
            <person name="Yang S."/>
            <person name="Zhang X.J."/>
        </authorList>
    </citation>
    <scope>VARIANTS PC2 SER-92 AND HIS-94</scope>
</reference>
<reference key="38">
    <citation type="journal article" date="2011" name="J. Invest. Dermatol.">
        <title>A large mutational study in pachyonychia congenita.</title>
        <authorList>
            <person name="Wilson N.J."/>
            <person name="Leachman S.A."/>
            <person name="Hansen C.D."/>
            <person name="McMullan A.C."/>
            <person name="Milstone L.M."/>
            <person name="Schwartz M.E."/>
            <person name="McLean W.H."/>
            <person name="Hull P.R."/>
            <person name="Smith F.J."/>
        </authorList>
    </citation>
    <scope>VARIANTS PC2 92-ASN--LEU-99 DEL AND SER-92</scope>
</reference>
<reference key="39">
    <citation type="journal article" date="2013" name="Int. J. Dermatol.">
        <title>A novel mutation of keratin 17 gene in a pedigree with pachyonychia congenita type 2.</title>
        <authorList>
            <person name="Qiang W."/>
            <person name="Kaibo W."/>
            <person name="Tienan L."/>
            <person name="Guilan Z."/>
            <person name="Yueyang L."/>
            <person name="Ting X."/>
            <person name="Fangji S."/>
        </authorList>
    </citation>
    <scope>VARIANT PC2 ARG-388</scope>
</reference>
<reference key="40">
    <citation type="journal article" date="2013" name="J. Dermatol.">
        <title>Novel mutation (p.L91P, c.272T&gt;C) of keratin 17 in a case with pachyonychia congenita type 2.</title>
        <authorList>
            <person name="Ichimiya M."/>
            <person name="Yamaguchi M."/>
            <person name="Nemoto K."/>
            <person name="Muto M."/>
        </authorList>
    </citation>
    <scope>VARIANT PC2 PRO-91</scope>
</reference>
<reference key="41">
    <citation type="journal article" date="2022" name="Hum. Mol. Genet.">
        <title>Formation of keto-type ceramides in palmoplantar keratoderma based on biallelic KDSR mutations in patients.</title>
        <authorList>
            <person name="Pilz R."/>
            <person name="Opalka L."/>
            <person name="Majcher A."/>
            <person name="Grimm E."/>
            <person name="Van Maldergem L."/>
            <person name="Mihalceanu S."/>
            <person name="Schaekel K."/>
            <person name="Enk A."/>
            <person name="Aubin F."/>
            <person name="Bursztejn A.C."/>
            <person name="Brischoux-Boucher E."/>
            <person name="Fischer J."/>
            <person name="Sandhoff R."/>
        </authorList>
    </citation>
    <scope>VARIANT 350-GLU--ARG-432 DEL</scope>
    <scope>INVOLVEMENT IN A KERATINIZATION DISORDER WITH ASSOCIATED THROMBOCYTOPENIA</scope>
</reference>
<gene>
    <name type="primary">KRT17</name>
</gene>
<feature type="chain" id="PRO_0000063664" description="Keratin, type I cytoskeletal 17">
    <location>
        <begin position="1"/>
        <end position="432"/>
    </location>
</feature>
<feature type="domain" description="IF rod" evidence="5">
    <location>
        <begin position="84"/>
        <end position="395"/>
    </location>
</feature>
<feature type="region of interest" description="Head">
    <location>
        <begin position="1"/>
        <end position="83"/>
    </location>
</feature>
<feature type="region of interest" description="Disordered" evidence="6">
    <location>
        <begin position="1"/>
        <end position="24"/>
    </location>
</feature>
<feature type="region of interest" description="Coil 1A">
    <location>
        <begin position="84"/>
        <end position="120"/>
    </location>
</feature>
<feature type="region of interest" description="Peptide epitope S1; induces T-cell and keratinocyte proliferation and IFN-gamma production">
    <location>
        <begin position="102"/>
        <end position="116"/>
    </location>
</feature>
<feature type="region of interest" description="Linker 1">
    <location>
        <begin position="121"/>
        <end position="138"/>
    </location>
</feature>
<feature type="region of interest" description="Coil 1B">
    <location>
        <begin position="139"/>
        <end position="230"/>
    </location>
</feature>
<feature type="region of interest" description="Peptide epitope S2; induces T-cell proliferation and IFN-gamma production">
    <location>
        <begin position="153"/>
        <end position="167"/>
    </location>
</feature>
<feature type="region of interest" description="Linker 12">
    <location>
        <begin position="231"/>
        <end position="250"/>
    </location>
</feature>
<feature type="region of interest" description="Coil 2">
    <location>
        <begin position="251"/>
        <end position="392"/>
    </location>
</feature>
<feature type="region of interest" description="Peptide epitope S4; induces T-cell and keratinocyte proliferation and IFN-gamma production">
    <location>
        <begin position="332"/>
        <end position="346"/>
    </location>
</feature>
<feature type="region of interest" description="Tail">
    <location>
        <begin position="393"/>
        <end position="432"/>
    </location>
</feature>
<feature type="modified residue" description="Phosphoserine" evidence="39">
    <location>
        <position position="12"/>
    </location>
</feature>
<feature type="modified residue" description="Phosphoserine" evidence="36 39">
    <location>
        <position position="13"/>
    </location>
</feature>
<feature type="modified residue" description="Phosphoserine" evidence="2">
    <location>
        <position position="25"/>
    </location>
</feature>
<feature type="modified residue" description="Phosphoserine" evidence="36 37 38 39">
    <location>
        <position position="32"/>
    </location>
</feature>
<feature type="modified residue" description="Phosphoserine" evidence="36 39">
    <location>
        <position position="39"/>
    </location>
</feature>
<feature type="modified residue" description="Phosphoserine; by RPS6KA1" evidence="27">
    <location>
        <position position="44"/>
    </location>
</feature>
<feature type="modified residue" description="Phosphothreonine" evidence="39">
    <location>
        <position position="110"/>
    </location>
</feature>
<feature type="modified residue" description="Phosphothreonine" evidence="3">
    <location>
        <position position="279"/>
    </location>
</feature>
<feature type="modified residue" description="Phosphoserine" evidence="39">
    <location>
        <position position="323"/>
    </location>
</feature>
<feature type="cross-link" description="Glycyl lysine isopeptide (Lys-Gly) (interchain with G-Cter in SUMO1); alternate" evidence="40">
    <location>
        <position position="15"/>
    </location>
</feature>
<feature type="cross-link" description="Glycyl lysine isopeptide (Lys-Gly) (interchain with G-Cter in SUMO2); alternate" evidence="40 41 42 43">
    <location>
        <position position="15"/>
    </location>
</feature>
<feature type="cross-link" description="Glycyl lysine isopeptide (Lys-Gly) (interchain with G-Cter in SUMO2)" evidence="43">
    <location>
        <position position="278"/>
    </location>
</feature>
<feature type="cross-link" description="Glycyl lysine isopeptide (Lys-Gly) (interchain with G-Cter in SUMO1); alternate" evidence="40">
    <location>
        <position position="399"/>
    </location>
</feature>
<feature type="cross-link" description="Glycyl lysine isopeptide (Lys-Gly) (interchain with G-Cter in SUMO2); alternate" evidence="40 41 42 43">
    <location>
        <position position="399"/>
    </location>
</feature>
<feature type="cross-link" description="Glycyl lysine isopeptide (Lys-Gly) (interchain with G-Cter in SUMO1); alternate" evidence="40">
    <location>
        <position position="400"/>
    </location>
</feature>
<feature type="cross-link" description="Glycyl lysine isopeptide (Lys-Gly) (interchain with G-Cter in SUMO2); alternate" evidence="43">
    <location>
        <position position="400"/>
    </location>
</feature>
<feature type="cross-link" description="Glycyl lysine isopeptide (Lys-Gly) (interchain with G-Cter in SUMO1); alternate" evidence="40">
    <location>
        <position position="419"/>
    </location>
</feature>
<feature type="cross-link" description="Glycyl lysine isopeptide (Lys-Gly) (interchain with G-Cter in SUMO2); alternate" evidence="40 41 43">
    <location>
        <position position="419"/>
    </location>
</feature>
<feature type="sequence variant" id="VAR_072441" description="In PC2; dbSNP:rs28928898." evidence="24">
    <original>M</original>
    <variation>K</variation>
    <location>
        <position position="88"/>
    </location>
</feature>
<feature type="sequence variant" id="VAR_010512" description="In PC2 and SM; dbSNP:rs28928898." evidence="7 20">
    <original>M</original>
    <variation>T</variation>
    <location>
        <position position="88"/>
    </location>
</feature>
<feature type="sequence variant" id="VAR_072442" description="In PC2." evidence="29">
    <original>L</original>
    <variation>P</variation>
    <location>
        <position position="91"/>
    </location>
</feature>
<feature type="sequence variant" id="VAR_072443" description="In PC2." evidence="26">
    <location>
        <begin position="92"/>
        <end position="99"/>
    </location>
</feature>
<feature type="sequence variant" id="VAR_003847" description="In PC2; dbSNP:rs28928896." evidence="32">
    <original>N</original>
    <variation>D</variation>
    <location>
        <position position="92"/>
    </location>
</feature>
<feature type="sequence variant" id="VAR_003848" description="In SM; dbSNP:rs28928896." evidence="33">
    <original>N</original>
    <variation>H</variation>
    <location>
        <position position="92"/>
    </location>
</feature>
<feature type="sequence variant" id="VAR_003849" description="In PC2; dbSNP:rs59151893." evidence="19 23 25 26 33 34">
    <original>N</original>
    <variation>S</variation>
    <location>
        <position position="92"/>
    </location>
</feature>
<feature type="sequence variant" id="VAR_017069" description="In PC2.">
    <location>
        <begin position="94"/>
        <end position="98"/>
    </location>
</feature>
<feature type="sequence variant" id="VAR_010513" description="In PC2 and SM; dbSNP:rs58730926." evidence="34">
    <original>R</original>
    <variation>C</variation>
    <location>
        <position position="94"/>
    </location>
</feature>
<feature type="sequence variant" id="VAR_003850" description="In SM and PC2; dbSNP:rs28928897." evidence="25 33">
    <original>R</original>
    <variation>H</variation>
    <location>
        <position position="94"/>
    </location>
</feature>
<feature type="sequence variant" id="VAR_017068" description="In PC2; dbSNP:rs28928897." evidence="10">
    <original>R</original>
    <variation>P</variation>
    <location>
        <position position="94"/>
    </location>
</feature>
<feature type="sequence variant" id="VAR_017071" description="In PC2; dbSNP:rs28928899." evidence="12">
    <original>L</original>
    <variation>P</variation>
    <location>
        <position position="95"/>
    </location>
</feature>
<feature type="sequence variant" id="VAR_017070" description="In PC2; dbSNP:rs28928899." evidence="10">
    <original>L</original>
    <variation>Q</variation>
    <location>
        <position position="95"/>
    </location>
</feature>
<feature type="sequence variant" id="VAR_017072" description="In PC2." evidence="12">
    <location>
        <position position="97"/>
    </location>
</feature>
<feature type="sequence variant" id="VAR_003851" description="In PC2; dbSNP:rs28933088." evidence="33">
    <original>Y</original>
    <variation>D</variation>
    <location>
        <position position="98"/>
    </location>
</feature>
<feature type="sequence variant" id="VAR_017073" description="In PC2; dbSNP:rs28933089." evidence="12">
    <original>L</original>
    <variation>P</variation>
    <location>
        <position position="99"/>
    </location>
</feature>
<feature type="sequence variant" id="VAR_017074" description="In PC2; dbSNP:rs59977263." evidence="11 18">
    <original>V</original>
    <variation>M</variation>
    <location>
        <position position="102"/>
    </location>
</feature>
<feature type="sequence variant" id="VAR_037083" description="In PC2; dbSNP:rs267607412." evidence="15 21">
    <original>N</original>
    <variation>D</variation>
    <location>
        <position position="109"/>
    </location>
</feature>
<feature type="sequence variant" id="VAR_089147" description="Found in a patient with a keratinization disorder with associated thrombocytopenia; uncertain significance." evidence="31">
    <location>
        <begin position="350"/>
        <end position="432"/>
    </location>
</feature>
<feature type="sequence variant" id="VAR_072444" description="In PC2; dbSNP:rs56690581." evidence="19">
    <original>L</original>
    <variation>P</variation>
    <location>
        <position position="388"/>
    </location>
</feature>
<feature type="sequence variant" id="VAR_072445" description="In PC2." evidence="28">
    <original>L</original>
    <variation>R</variation>
    <location>
        <position position="388"/>
    </location>
</feature>
<feature type="mutagenesis site" description="Down-regulates both proliferation of psoriatic T-cells and IFN-gamma production; suppresses keratinocyte growth when part of the altered peptide epitope S1." evidence="22">
    <original>R</original>
    <variation>A</variation>
    <location>
        <position position="103"/>
    </location>
</feature>
<feature type="mutagenesis site" description="Down-regulates proliferation of psoriatic T-cells and IFN-gamma production when part of the altered peptide epitope S1." evidence="22">
    <original>E</original>
    <variation>A</variation>
    <location>
        <position position="106"/>
    </location>
</feature>
<feature type="mutagenesis site" description="No significant effect on T-cell proliferation or IFN-gamma production when part of the altered peptide epitope S1." evidence="22">
    <original>N</original>
    <variation>A</variation>
    <location>
        <position position="109"/>
    </location>
</feature>
<feature type="mutagenesis site" description="No significant effect on T-cell proliferation but reduces IFN-gamma production when part of the altered peptide epitope S2." evidence="22">
    <original>N</original>
    <variation>A</variation>
    <location>
        <position position="154"/>
    </location>
</feature>
<feature type="mutagenesis site" description="No significant effect on T-cell proliferation but reduces IFN-gamma production when part of the altered peptide epitope S2." evidence="22">
    <original>I</original>
    <variation>A</variation>
    <location>
        <position position="155"/>
    </location>
</feature>
<feature type="mutagenesis site" description="Down-regulates proliferation of psoriatic T-cells and IFN-gamma production when part of the altered peptide epitope S2." evidence="22">
    <original>L</original>
    <variation>A</variation>
    <location>
        <position position="157"/>
    </location>
</feature>
<feature type="mutagenesis site" description="No significant effect on T-cell proliferation but reduces IFN-gamma production when part of the altered peptide epitope S4." evidence="22">
    <original>D</original>
    <variation>A</variation>
    <location>
        <position position="160"/>
    </location>
</feature>
<feature type="mutagenesis site" description="No significant effect on T-cell proliferation but reduces IFN-gamma production when part of the altered peptide epitope S4." evidence="22">
    <original>N</original>
    <variation>A</variation>
    <location>
        <position position="333"/>
    </location>
</feature>
<feature type="mutagenesis site" description="No significant effect on T-cell proliferation but can induce IFN-gamma production when part of the altered peptide epitope S2." evidence="22">
    <original>R</original>
    <variation>A</variation>
    <location>
        <position position="334"/>
    </location>
</feature>
<feature type="mutagenesis site" description="No significant effect on T-cell proliferation but reduces IFN-gamma production when part of the altered peptide epitope S2." evidence="22">
    <original>C</original>
    <variation>A</variation>
    <location>
        <position position="336"/>
    </location>
</feature>
<feature type="mutagenesis site" description="Down-regulates both proliferation of psoriatic T-cells and IFN-gamma production; suppresses keratinocyte growth when part of the altered peptide epitope S4." evidence="22">
    <original>L</original>
    <variation>A</variation>
    <location>
        <position position="339"/>
    </location>
</feature>
<feature type="sequence conflict" description="In Ref. 4; AL353997/AC022596." evidence="35" ref="4">
    <original>R</original>
    <variation>Q</variation>
    <location>
        <position position="30"/>
    </location>
</feature>
<feature type="sequence conflict" description="In Ref. 4; AL353997/AC022596." evidence="35" ref="4">
    <original>L</original>
    <variation>P</variation>
    <location>
        <position position="42"/>
    </location>
</feature>
<feature type="sequence conflict" description="In Ref. 3; BAC04534." evidence="35" ref="3">
    <location>
        <begin position="51"/>
        <end position="56"/>
    </location>
</feature>
<feature type="sequence conflict" description="In Ref. 4; AL353997/AC022596." evidence="35" ref="4">
    <original>T</original>
    <variation>A</variation>
    <location>
        <position position="51"/>
    </location>
</feature>
<feature type="sequence conflict" description="In Ref. 4; AL353997." evidence="35" ref="4">
    <original>S</original>
    <variation>SS</variation>
    <location>
        <position position="72"/>
    </location>
</feature>
<feature type="sequence conflict" description="In Ref. 4; AC022596." evidence="35" ref="4">
    <original>FG</original>
    <variation>SFE</variation>
    <location>
        <begin position="73"/>
        <end position="74"/>
    </location>
</feature>
<feature type="sequence conflict" description="In Ref. 4; AL353997." evidence="35" ref="4">
    <original>G</original>
    <variation>E</variation>
    <location>
        <position position="74"/>
    </location>
</feature>
<feature type="sequence conflict" description="In Ref. 4; AL353997/AC022596." evidence="35" ref="4">
    <original>A</original>
    <variation>V</variation>
    <location>
        <position position="81"/>
    </location>
</feature>
<feature type="sequence conflict" description="In Ref. 5; AAH72018." evidence="35" ref="5">
    <location>
        <begin position="94"/>
        <end position="108"/>
    </location>
</feature>
<feature type="sequence conflict" description="In Ref. 4; AL353997/AC022596." evidence="35" ref="4">
    <original>T</original>
    <variation>I</variation>
    <location>
        <position position="137"/>
    </location>
</feature>
<feature type="sequence conflict" description="In Ref. 4; AL353997." evidence="35" ref="4">
    <original>ILT</original>
    <variation>VGPA</variation>
    <location>
        <begin position="145"/>
        <end position="147"/>
    </location>
</feature>
<feature type="sequence conflict" description="In Ref. 4; AC022596." evidence="35" ref="4">
    <original>Q</original>
    <variation>H</variation>
    <location>
        <position position="158"/>
    </location>
</feature>
<feature type="sequence conflict" description="In Ref. 4; AL353997." evidence="35" ref="4">
    <original>I</original>
    <variation>N</variation>
    <location>
        <position position="159"/>
    </location>
</feature>
<feature type="sequence conflict" description="In Ref. 4; AL353997/AC022596." evidence="35" ref="4">
    <original>R</original>
    <variation>H</variation>
    <location>
        <position position="163"/>
    </location>
</feature>
<feature type="sequence conflict" description="In Ref. 4; AL353997/AC022596." evidence="35" ref="4">
    <original>D</original>
    <variation>A</variation>
    <location>
        <position position="167"/>
    </location>
</feature>
<feature type="sequence conflict" description="In Ref. 4; AL353997/AC022596." evidence="35" ref="4">
    <original>R</original>
    <variation>C</variation>
    <location>
        <position position="180"/>
    </location>
</feature>
<feature type="sequence conflict" description="In Ref. 4; AL353997/AC022596." evidence="35" ref="4">
    <original>LR</original>
    <variation>PC</variation>
    <location>
        <begin position="190"/>
        <end position="191"/>
    </location>
</feature>
<feature type="sequence conflict" description="In Ref. 4; AL353997." evidence="35" ref="4">
    <original>L</original>
    <variation>P</variation>
    <location>
        <position position="204"/>
    </location>
</feature>
<feature type="sequence conflict" description="In Ref. 4; AL353997/AC022596." evidence="35" ref="4">
    <original>Q</original>
    <variation>H</variation>
    <location>
        <position position="207"/>
    </location>
</feature>
<feature type="sequence conflict" description="In Ref. 4; AL353997/AC022596." evidence="35" ref="4">
    <location>
        <position position="225"/>
    </location>
</feature>
<feature type="sequence conflict" description="In Ref. 4; AL353997/AC022596." evidence="35" ref="4">
    <original>L</original>
    <variation>P</variation>
    <location>
        <position position="229"/>
    </location>
</feature>
<feature type="sequence conflict" description="In Ref. 4; AL353997/AC022596." evidence="35" ref="4">
    <original>D</original>
    <variation>G</variation>
    <location>
        <position position="242"/>
    </location>
</feature>
<feature type="sequence conflict" description="In Ref. 4; AL353997/AC022596." evidence="35" ref="4">
    <original>D</original>
    <variation>E</variation>
    <location>
        <position position="258"/>
    </location>
</feature>
<feature type="sequence conflict" description="In Ref. 4; AL353997/AC022596." evidence="35" ref="4">
    <original>R</original>
    <variation>C</variation>
    <location>
        <position position="305"/>
    </location>
</feature>
<feature type="sequence conflict" description="In Ref. 4; AL353997/AC022596." evidence="35" ref="4">
    <original>V</original>
    <variation>M</variation>
    <location>
        <position position="337"/>
    </location>
</feature>
<feature type="sequence conflict" description="In Ref. 4; AL353997/AC022596." evidence="35" ref="4">
    <original>Q</original>
    <variation>R</variation>
    <location>
        <position position="352"/>
    </location>
</feature>
<feature type="sequence conflict" description="In Ref. 4; AL353997/AC022596." evidence="35" ref="4">
    <original>R</original>
    <variation>L</variation>
    <location>
        <position position="357"/>
    </location>
</feature>
<feature type="sequence conflict" description="In Ref. 4; AL353997/AC022596." evidence="35" ref="4">
    <original>VKT</original>
    <variation>MKM</variation>
    <location>
        <begin position="373"/>
        <end position="375"/>
    </location>
</feature>
<feature type="sequence conflict" description="In Ref. 4; AL353997/AC022596." evidence="35" ref="4">
    <original>Q</original>
    <variation>L</variation>
    <location>
        <position position="379"/>
    </location>
</feature>
<feature type="sequence conflict" description="In Ref. 4; AL353997/AC022596." evidence="35" ref="4">
    <original>A</original>
    <variation>T</variation>
    <location>
        <position position="382"/>
    </location>
</feature>
<feature type="sequence conflict" description="In Ref. 4; AL353997/AC022596." evidence="35" ref="4">
    <original>R</original>
    <variation>H</variation>
    <location>
        <position position="385"/>
    </location>
</feature>
<feature type="sequence conflict" description="In Ref. 4; AC022596." evidence="35" ref="4">
    <original>LTQYKKEPVT</original>
    <variation>FRMSESSPVS</variation>
    <location>
        <begin position="395"/>
        <end position="404"/>
    </location>
</feature>
<feature type="sequence conflict" description="In Ref. 4; AL353997." evidence="35" ref="4">
    <original>R</original>
    <variation>C</variation>
    <location>
        <position position="406"/>
    </location>
</feature>
<feature type="sequence conflict" description="In Ref. 4; AL353997." evidence="35" ref="4">
    <original>R</original>
    <variation>P</variation>
    <location>
        <position position="409"/>
    </location>
</feature>
<feature type="sequence conflict" description="In Ref. 4; AL353997." evidence="35" ref="4">
    <original>H</original>
    <variation>R</variation>
    <location>
        <position position="428"/>
    </location>
</feature>